<evidence type="ECO:0000255" key="1">
    <source>
        <dbReference type="HAMAP-Rule" id="MF_00595"/>
    </source>
</evidence>
<evidence type="ECO:0000256" key="2">
    <source>
        <dbReference type="SAM" id="MobiDB-lite"/>
    </source>
</evidence>
<proteinExistence type="inferred from homology"/>
<sequence>MKSSGSARATRRNAVSSSSAPAHAEPPARRAAKPARKLDGAAARPLAPTNAASAKPQGRTREDKDRPLFEDIRYLGRLLGDVVREQEGDAVFDVVETIRQTAVKFRREDDKAAAQTLEKMLRKLTPEQTVSVVRAFSYFSHLANIAEDRHHNRRRRIHALAGSAAQAGTVAYALDKLKQAGDASSKTIKQFFEGALIVPVLTAHPTEVQRKSILDAQHDIARLLAERDQPLTARELAHNEALLRARVTTLWQTRMLRDARLTVADEIENALSYYRATFLDELPALYADIEEALAEHGLRARVPAFFQMGSWIGGDRDGNPNVTAATLDEAISRQAAVIFEHYLEQVHKLGAELSVSNLLVGASDALKALAAASPDQSPHRVDEPYRRALIGVYTRLAASARVRLGEGTVPVRSAGRGAAPVRATPYADAEEFAADLRVLTDSLALHHGESLATPRLAPLMRAAEVFGFHLASIDLRQSSDIHEAVVAELLARGGVEADYAALPEADKLRVLLAALADPRPLRSPYLDYSDLAKSELGVLERAHAIRAQFGARAVRNYIISHTETVSDLVEVLLLQKETGLFEGTLGTPHANARNGLMVIPLFETIADLRNASDIMRAFFALPGVGELLAHQGHEQEVMLGYSDSNKDGGFLTSNWELYRAELALVDLFDERGIKLRLFHGRGGTVGRGGGPTYQAILSQPPGTVNGQIRLTEQGEVIASKFANPEIGRRNLETVVAATLEATLAPHSNAPKQLPAFEAAMQTLSDAAMASYRALVYETPGFTDYFFSSTPITEIAELNIGSRPASRKLQDPKNRKIEDLRAIPWGFSWGQCRLLLTGWYGFGSAVAAYLDGAPDAAERGKRVALLKKMNKTWPFFANLLSNMDMVLAKTDLAVASRYAQLVADKKLRKHVFERIVAEWHRTADALAEITGAHARLAANPLLARSIKNRFPYLDPLNHLQVELIKRHRAGDTNARLRRGIHLTINGIAAGLRNTG</sequence>
<keyword id="KW-0120">Carbon dioxide fixation</keyword>
<keyword id="KW-0456">Lyase</keyword>
<keyword id="KW-0460">Magnesium</keyword>
<keyword id="KW-1185">Reference proteome</keyword>
<reference key="1">
    <citation type="journal article" date="2004" name="Proc. Natl. Acad. Sci. U.S.A.">
        <title>Genomic plasticity of the causative agent of melioidosis, Burkholderia pseudomallei.</title>
        <authorList>
            <person name="Holden M.T.G."/>
            <person name="Titball R.W."/>
            <person name="Peacock S.J."/>
            <person name="Cerdeno-Tarraga A.-M."/>
            <person name="Atkins T."/>
            <person name="Crossman L.C."/>
            <person name="Pitt T."/>
            <person name="Churcher C."/>
            <person name="Mungall K.L."/>
            <person name="Bentley S.D."/>
            <person name="Sebaihia M."/>
            <person name="Thomson N.R."/>
            <person name="Bason N."/>
            <person name="Beacham I.R."/>
            <person name="Brooks K."/>
            <person name="Brown K.A."/>
            <person name="Brown N.F."/>
            <person name="Challis G.L."/>
            <person name="Cherevach I."/>
            <person name="Chillingworth T."/>
            <person name="Cronin A."/>
            <person name="Crossett B."/>
            <person name="Davis P."/>
            <person name="DeShazer D."/>
            <person name="Feltwell T."/>
            <person name="Fraser A."/>
            <person name="Hance Z."/>
            <person name="Hauser H."/>
            <person name="Holroyd S."/>
            <person name="Jagels K."/>
            <person name="Keith K.E."/>
            <person name="Maddison M."/>
            <person name="Moule S."/>
            <person name="Price C."/>
            <person name="Quail M.A."/>
            <person name="Rabbinowitsch E."/>
            <person name="Rutherford K."/>
            <person name="Sanders M."/>
            <person name="Simmonds M."/>
            <person name="Songsivilai S."/>
            <person name="Stevens K."/>
            <person name="Tumapa S."/>
            <person name="Vesaratchavest M."/>
            <person name="Whitehead S."/>
            <person name="Yeats C."/>
            <person name="Barrell B.G."/>
            <person name="Oyston P.C.F."/>
            <person name="Parkhill J."/>
        </authorList>
    </citation>
    <scope>NUCLEOTIDE SEQUENCE [LARGE SCALE GENOMIC DNA]</scope>
    <source>
        <strain>K96243</strain>
    </source>
</reference>
<name>CAPP_BURPS</name>
<comment type="function">
    <text evidence="1">Forms oxaloacetate, a four-carbon dicarboxylic acid source for the tricarboxylic acid cycle.</text>
</comment>
<comment type="catalytic activity">
    <reaction evidence="1">
        <text>oxaloacetate + phosphate = phosphoenolpyruvate + hydrogencarbonate</text>
        <dbReference type="Rhea" id="RHEA:28370"/>
        <dbReference type="ChEBI" id="CHEBI:16452"/>
        <dbReference type="ChEBI" id="CHEBI:17544"/>
        <dbReference type="ChEBI" id="CHEBI:43474"/>
        <dbReference type="ChEBI" id="CHEBI:58702"/>
        <dbReference type="EC" id="4.1.1.31"/>
    </reaction>
</comment>
<comment type="cofactor">
    <cofactor evidence="1">
        <name>Mg(2+)</name>
        <dbReference type="ChEBI" id="CHEBI:18420"/>
    </cofactor>
</comment>
<comment type="similarity">
    <text evidence="1">Belongs to the PEPCase type 1 family.</text>
</comment>
<gene>
    <name evidence="1" type="primary">ppc</name>
    <name type="ordered locus">BPSL1013</name>
</gene>
<feature type="chain" id="PRO_0000166585" description="Phosphoenolpyruvate carboxylase">
    <location>
        <begin position="1"/>
        <end position="994"/>
    </location>
</feature>
<feature type="region of interest" description="Disordered" evidence="2">
    <location>
        <begin position="1"/>
        <end position="66"/>
    </location>
</feature>
<feature type="compositionally biased region" description="Low complexity" evidence="2">
    <location>
        <begin position="14"/>
        <end position="25"/>
    </location>
</feature>
<feature type="compositionally biased region" description="Low complexity" evidence="2">
    <location>
        <begin position="41"/>
        <end position="54"/>
    </location>
</feature>
<feature type="active site" evidence="1">
    <location>
        <position position="204"/>
    </location>
</feature>
<feature type="active site" evidence="1">
    <location>
        <position position="646"/>
    </location>
</feature>
<dbReference type="EC" id="4.1.1.31" evidence="1"/>
<dbReference type="EMBL" id="BX571965">
    <property type="protein sequence ID" value="CAH35009.1"/>
    <property type="molecule type" value="Genomic_DNA"/>
</dbReference>
<dbReference type="RefSeq" id="WP_004191560.1">
    <property type="nucleotide sequence ID" value="NZ_CP009538.1"/>
</dbReference>
<dbReference type="RefSeq" id="YP_107641.1">
    <property type="nucleotide sequence ID" value="NC_006350.1"/>
</dbReference>
<dbReference type="SMR" id="Q63W75"/>
<dbReference type="STRING" id="272560.BPSL1013"/>
<dbReference type="GeneID" id="93059514"/>
<dbReference type="KEGG" id="bps:BPSL1013"/>
<dbReference type="PATRIC" id="fig|272560.51.peg.555"/>
<dbReference type="eggNOG" id="COG2352">
    <property type="taxonomic scope" value="Bacteria"/>
</dbReference>
<dbReference type="Proteomes" id="UP000000605">
    <property type="component" value="Chromosome 1"/>
</dbReference>
<dbReference type="GO" id="GO:0005829">
    <property type="term" value="C:cytosol"/>
    <property type="evidence" value="ECO:0007669"/>
    <property type="project" value="TreeGrafter"/>
</dbReference>
<dbReference type="GO" id="GO:0000287">
    <property type="term" value="F:magnesium ion binding"/>
    <property type="evidence" value="ECO:0007669"/>
    <property type="project" value="UniProtKB-UniRule"/>
</dbReference>
<dbReference type="GO" id="GO:0008964">
    <property type="term" value="F:phosphoenolpyruvate carboxylase activity"/>
    <property type="evidence" value="ECO:0007669"/>
    <property type="project" value="UniProtKB-UniRule"/>
</dbReference>
<dbReference type="GO" id="GO:0015977">
    <property type="term" value="P:carbon fixation"/>
    <property type="evidence" value="ECO:0007669"/>
    <property type="project" value="UniProtKB-UniRule"/>
</dbReference>
<dbReference type="GO" id="GO:0006107">
    <property type="term" value="P:oxaloacetate metabolic process"/>
    <property type="evidence" value="ECO:0007669"/>
    <property type="project" value="UniProtKB-UniRule"/>
</dbReference>
<dbReference type="GO" id="GO:0006099">
    <property type="term" value="P:tricarboxylic acid cycle"/>
    <property type="evidence" value="ECO:0007669"/>
    <property type="project" value="InterPro"/>
</dbReference>
<dbReference type="Gene3D" id="1.20.1440.90">
    <property type="entry name" value="Phosphoenolpyruvate/pyruvate domain"/>
    <property type="match status" value="1"/>
</dbReference>
<dbReference type="HAMAP" id="MF_00595">
    <property type="entry name" value="PEPcase_type1"/>
    <property type="match status" value="1"/>
</dbReference>
<dbReference type="InterPro" id="IPR021135">
    <property type="entry name" value="PEP_COase"/>
</dbReference>
<dbReference type="InterPro" id="IPR022805">
    <property type="entry name" value="PEP_COase_bac/pln-type"/>
</dbReference>
<dbReference type="InterPro" id="IPR018129">
    <property type="entry name" value="PEP_COase_Lys_AS"/>
</dbReference>
<dbReference type="InterPro" id="IPR033129">
    <property type="entry name" value="PEPCASE_His_AS"/>
</dbReference>
<dbReference type="InterPro" id="IPR015813">
    <property type="entry name" value="Pyrv/PenolPyrv_kinase-like_dom"/>
</dbReference>
<dbReference type="NCBIfam" id="NF000584">
    <property type="entry name" value="PRK00009.1"/>
    <property type="match status" value="1"/>
</dbReference>
<dbReference type="PANTHER" id="PTHR30523">
    <property type="entry name" value="PHOSPHOENOLPYRUVATE CARBOXYLASE"/>
    <property type="match status" value="1"/>
</dbReference>
<dbReference type="PANTHER" id="PTHR30523:SF6">
    <property type="entry name" value="PHOSPHOENOLPYRUVATE CARBOXYLASE"/>
    <property type="match status" value="1"/>
</dbReference>
<dbReference type="Pfam" id="PF00311">
    <property type="entry name" value="PEPcase"/>
    <property type="match status" value="1"/>
</dbReference>
<dbReference type="PRINTS" id="PR00150">
    <property type="entry name" value="PEPCARBXLASE"/>
</dbReference>
<dbReference type="SUPFAM" id="SSF51621">
    <property type="entry name" value="Phosphoenolpyruvate/pyruvate domain"/>
    <property type="match status" value="1"/>
</dbReference>
<dbReference type="PROSITE" id="PS00781">
    <property type="entry name" value="PEPCASE_1"/>
    <property type="match status" value="1"/>
</dbReference>
<dbReference type="PROSITE" id="PS00393">
    <property type="entry name" value="PEPCASE_2"/>
    <property type="match status" value="1"/>
</dbReference>
<protein>
    <recommendedName>
        <fullName evidence="1">Phosphoenolpyruvate carboxylase</fullName>
        <shortName evidence="1">PEPC</shortName>
        <shortName evidence="1">PEPCase</shortName>
        <ecNumber evidence="1">4.1.1.31</ecNumber>
    </recommendedName>
</protein>
<organism>
    <name type="scientific">Burkholderia pseudomallei (strain K96243)</name>
    <dbReference type="NCBI Taxonomy" id="272560"/>
    <lineage>
        <taxon>Bacteria</taxon>
        <taxon>Pseudomonadati</taxon>
        <taxon>Pseudomonadota</taxon>
        <taxon>Betaproteobacteria</taxon>
        <taxon>Burkholderiales</taxon>
        <taxon>Burkholderiaceae</taxon>
        <taxon>Burkholderia</taxon>
        <taxon>pseudomallei group</taxon>
    </lineage>
</organism>
<accession>Q63W75</accession>